<accession>A4YBV6</accession>
<sequence length="162" mass="17556">MNPRRKKRLTLAVALIGGVAAIASLLLYALNSNLNLFYTPSEIVNGKTDTGVKPDVGQRIRVGGMVTVGSMVRDPDSLHVQFAVHDSLGGEILVTYDDLLPDLFREGQGIVAQGVLTAEGKLEATEVLAKHDENYMPPEVAEAMGQKHEKLDYSQQKAPDTK</sequence>
<comment type="function">
    <text evidence="1">Heme chaperone required for the biogenesis of c-type cytochromes. Transiently binds heme delivered by CcmC and transfers the heme to apo-cytochromes in a process facilitated by CcmF and CcmH.</text>
</comment>
<comment type="subcellular location">
    <subcellularLocation>
        <location evidence="1">Cell inner membrane</location>
        <topology evidence="1">Single-pass type II membrane protein</topology>
        <orientation evidence="1">Periplasmic side</orientation>
    </subcellularLocation>
</comment>
<comment type="similarity">
    <text evidence="1">Belongs to the CcmE/CycJ family.</text>
</comment>
<dbReference type="EMBL" id="CP000681">
    <property type="protein sequence ID" value="ABP77439.1"/>
    <property type="molecule type" value="Genomic_DNA"/>
</dbReference>
<dbReference type="SMR" id="A4YBV6"/>
<dbReference type="STRING" id="319224.Sputcn32_3731"/>
<dbReference type="KEGG" id="spc:Sputcn32_3731"/>
<dbReference type="eggNOG" id="COG2332">
    <property type="taxonomic scope" value="Bacteria"/>
</dbReference>
<dbReference type="HOGENOM" id="CLU_079503_1_0_6"/>
<dbReference type="GO" id="GO:0005886">
    <property type="term" value="C:plasma membrane"/>
    <property type="evidence" value="ECO:0007669"/>
    <property type="project" value="UniProtKB-SubCell"/>
</dbReference>
<dbReference type="GO" id="GO:0020037">
    <property type="term" value="F:heme binding"/>
    <property type="evidence" value="ECO:0007669"/>
    <property type="project" value="InterPro"/>
</dbReference>
<dbReference type="GO" id="GO:0046872">
    <property type="term" value="F:metal ion binding"/>
    <property type="evidence" value="ECO:0007669"/>
    <property type="project" value="UniProtKB-KW"/>
</dbReference>
<dbReference type="GO" id="GO:0017004">
    <property type="term" value="P:cytochrome complex assembly"/>
    <property type="evidence" value="ECO:0007669"/>
    <property type="project" value="UniProtKB-KW"/>
</dbReference>
<dbReference type="FunFam" id="2.40.50.140:FF:000104">
    <property type="entry name" value="Cytochrome c-type biogenesis protein CcmE"/>
    <property type="match status" value="1"/>
</dbReference>
<dbReference type="Gene3D" id="2.40.50.140">
    <property type="entry name" value="Nucleic acid-binding proteins"/>
    <property type="match status" value="1"/>
</dbReference>
<dbReference type="HAMAP" id="MF_01959">
    <property type="entry name" value="CcmE"/>
    <property type="match status" value="1"/>
</dbReference>
<dbReference type="InterPro" id="IPR004329">
    <property type="entry name" value="CcmE"/>
</dbReference>
<dbReference type="InterPro" id="IPR036127">
    <property type="entry name" value="CcmE-like_sf"/>
</dbReference>
<dbReference type="InterPro" id="IPR012340">
    <property type="entry name" value="NA-bd_OB-fold"/>
</dbReference>
<dbReference type="NCBIfam" id="NF009638">
    <property type="entry name" value="PRK13165.1"/>
    <property type="match status" value="1"/>
</dbReference>
<dbReference type="NCBIfam" id="NF009729">
    <property type="entry name" value="PRK13254.1-3"/>
    <property type="match status" value="1"/>
</dbReference>
<dbReference type="PANTHER" id="PTHR34128">
    <property type="entry name" value="CYTOCHROME C-TYPE BIOGENESIS PROTEIN CCME HOMOLOG, MITOCHONDRIAL"/>
    <property type="match status" value="1"/>
</dbReference>
<dbReference type="PANTHER" id="PTHR34128:SF2">
    <property type="entry name" value="CYTOCHROME C-TYPE BIOGENESIS PROTEIN CCME HOMOLOG, MITOCHONDRIAL"/>
    <property type="match status" value="1"/>
</dbReference>
<dbReference type="Pfam" id="PF03100">
    <property type="entry name" value="CcmE"/>
    <property type="match status" value="1"/>
</dbReference>
<dbReference type="SUPFAM" id="SSF82093">
    <property type="entry name" value="Heme chaperone CcmE"/>
    <property type="match status" value="1"/>
</dbReference>
<proteinExistence type="inferred from homology"/>
<evidence type="ECO:0000255" key="1">
    <source>
        <dbReference type="HAMAP-Rule" id="MF_01959"/>
    </source>
</evidence>
<evidence type="ECO:0000256" key="2">
    <source>
        <dbReference type="SAM" id="MobiDB-lite"/>
    </source>
</evidence>
<feature type="chain" id="PRO_1000070857" description="Cytochrome c-type biogenesis protein CcmE">
    <location>
        <begin position="1"/>
        <end position="162"/>
    </location>
</feature>
<feature type="topological domain" description="Cytoplasmic" evidence="1">
    <location>
        <begin position="1"/>
        <end position="8"/>
    </location>
</feature>
<feature type="transmembrane region" description="Helical; Signal-anchor for type II membrane protein" evidence="1">
    <location>
        <begin position="9"/>
        <end position="29"/>
    </location>
</feature>
<feature type="topological domain" description="Periplasmic" evidence="1">
    <location>
        <begin position="30"/>
        <end position="162"/>
    </location>
</feature>
<feature type="region of interest" description="Disordered" evidence="2">
    <location>
        <begin position="139"/>
        <end position="162"/>
    </location>
</feature>
<feature type="compositionally biased region" description="Polar residues" evidence="2">
    <location>
        <begin position="153"/>
        <end position="162"/>
    </location>
</feature>
<feature type="binding site" description="covalent" evidence="1">
    <location>
        <position position="131"/>
    </location>
    <ligand>
        <name>heme</name>
        <dbReference type="ChEBI" id="CHEBI:30413"/>
    </ligand>
</feature>
<feature type="binding site" description="axial binding residue" evidence="1">
    <location>
        <position position="135"/>
    </location>
    <ligand>
        <name>heme</name>
        <dbReference type="ChEBI" id="CHEBI:30413"/>
    </ligand>
    <ligandPart>
        <name>Fe</name>
        <dbReference type="ChEBI" id="CHEBI:18248"/>
    </ligandPart>
</feature>
<keyword id="KW-0997">Cell inner membrane</keyword>
<keyword id="KW-1003">Cell membrane</keyword>
<keyword id="KW-0201">Cytochrome c-type biogenesis</keyword>
<keyword id="KW-0349">Heme</keyword>
<keyword id="KW-0408">Iron</keyword>
<keyword id="KW-0472">Membrane</keyword>
<keyword id="KW-0479">Metal-binding</keyword>
<keyword id="KW-0735">Signal-anchor</keyword>
<keyword id="KW-0812">Transmembrane</keyword>
<keyword id="KW-1133">Transmembrane helix</keyword>
<reference key="1">
    <citation type="submission" date="2007-04" db="EMBL/GenBank/DDBJ databases">
        <title>Complete sequence of Shewanella putrefaciens CN-32.</title>
        <authorList>
            <consortium name="US DOE Joint Genome Institute"/>
            <person name="Copeland A."/>
            <person name="Lucas S."/>
            <person name="Lapidus A."/>
            <person name="Barry K."/>
            <person name="Detter J.C."/>
            <person name="Glavina del Rio T."/>
            <person name="Hammon N."/>
            <person name="Israni S."/>
            <person name="Dalin E."/>
            <person name="Tice H."/>
            <person name="Pitluck S."/>
            <person name="Chain P."/>
            <person name="Malfatti S."/>
            <person name="Shin M."/>
            <person name="Vergez L."/>
            <person name="Schmutz J."/>
            <person name="Larimer F."/>
            <person name="Land M."/>
            <person name="Hauser L."/>
            <person name="Kyrpides N."/>
            <person name="Mikhailova N."/>
            <person name="Romine M.F."/>
            <person name="Fredrickson J."/>
            <person name="Tiedje J."/>
            <person name="Richardson P."/>
        </authorList>
    </citation>
    <scope>NUCLEOTIDE SEQUENCE [LARGE SCALE GENOMIC DNA]</scope>
    <source>
        <strain>CN-32 / ATCC BAA-453</strain>
    </source>
</reference>
<gene>
    <name evidence="1" type="primary">ccmE</name>
    <name evidence="1" type="synonym">cycJ</name>
    <name type="ordered locus">Sputcn32_3731</name>
</gene>
<name>CCME_SHEPC</name>
<protein>
    <recommendedName>
        <fullName evidence="1">Cytochrome c-type biogenesis protein CcmE</fullName>
    </recommendedName>
    <alternativeName>
        <fullName evidence="1">Cytochrome c maturation protein E</fullName>
    </alternativeName>
    <alternativeName>
        <fullName evidence="1">Heme chaperone CcmE</fullName>
    </alternativeName>
</protein>
<organism>
    <name type="scientific">Shewanella putrefaciens (strain CN-32 / ATCC BAA-453)</name>
    <dbReference type="NCBI Taxonomy" id="319224"/>
    <lineage>
        <taxon>Bacteria</taxon>
        <taxon>Pseudomonadati</taxon>
        <taxon>Pseudomonadota</taxon>
        <taxon>Gammaproteobacteria</taxon>
        <taxon>Alteromonadales</taxon>
        <taxon>Shewanellaceae</taxon>
        <taxon>Shewanella</taxon>
    </lineage>
</organism>